<accession>B5F3D4</accession>
<sequence>MSLFDKKHLVTQADALPGRNTPMPIATLHAVNEHSMTNVPAGMEIAYFAMGCFWGVERLFWQLPGVYSTAAGYAGGYTPNPTYREVCSGQTGHAEAVRIVYDPAVIRYEQLLQTFWENHDPTQGMQQGNDHGTQYRSAIYPLTPEQNAAAHASRERFQAAMAAAGDHRPITTEIAHATPFYYAEDEHQQYLHKNPYGYCGIGGIGVCLPPDA</sequence>
<evidence type="ECO:0000255" key="1">
    <source>
        <dbReference type="HAMAP-Rule" id="MF_01401"/>
    </source>
</evidence>
<feature type="chain" id="PRO_1000145428" description="Peptide methionine sulfoxide reductase MsrA">
    <location>
        <begin position="1"/>
        <end position="212"/>
    </location>
</feature>
<feature type="active site" evidence="1">
    <location>
        <position position="52"/>
    </location>
</feature>
<proteinExistence type="inferred from homology"/>
<gene>
    <name evidence="1" type="primary">msrA</name>
    <name type="ordered locus">SeAg_B4687</name>
</gene>
<organism>
    <name type="scientific">Salmonella agona (strain SL483)</name>
    <dbReference type="NCBI Taxonomy" id="454166"/>
    <lineage>
        <taxon>Bacteria</taxon>
        <taxon>Pseudomonadati</taxon>
        <taxon>Pseudomonadota</taxon>
        <taxon>Gammaproteobacteria</taxon>
        <taxon>Enterobacterales</taxon>
        <taxon>Enterobacteriaceae</taxon>
        <taxon>Salmonella</taxon>
    </lineage>
</organism>
<comment type="function">
    <text evidence="1">Has an important function as a repair enzyme for proteins that have been inactivated by oxidation. Catalyzes the reversible oxidation-reduction of methionine sulfoxide in proteins to methionine.</text>
</comment>
<comment type="catalytic activity">
    <reaction evidence="1">
        <text>L-methionyl-[protein] + [thioredoxin]-disulfide + H2O = L-methionyl-(S)-S-oxide-[protein] + [thioredoxin]-dithiol</text>
        <dbReference type="Rhea" id="RHEA:14217"/>
        <dbReference type="Rhea" id="RHEA-COMP:10698"/>
        <dbReference type="Rhea" id="RHEA-COMP:10700"/>
        <dbReference type="Rhea" id="RHEA-COMP:12313"/>
        <dbReference type="Rhea" id="RHEA-COMP:12315"/>
        <dbReference type="ChEBI" id="CHEBI:15377"/>
        <dbReference type="ChEBI" id="CHEBI:16044"/>
        <dbReference type="ChEBI" id="CHEBI:29950"/>
        <dbReference type="ChEBI" id="CHEBI:44120"/>
        <dbReference type="ChEBI" id="CHEBI:50058"/>
        <dbReference type="EC" id="1.8.4.11"/>
    </reaction>
</comment>
<comment type="catalytic activity">
    <reaction evidence="1">
        <text>[thioredoxin]-disulfide + L-methionine + H2O = L-methionine (S)-S-oxide + [thioredoxin]-dithiol</text>
        <dbReference type="Rhea" id="RHEA:19993"/>
        <dbReference type="Rhea" id="RHEA-COMP:10698"/>
        <dbReference type="Rhea" id="RHEA-COMP:10700"/>
        <dbReference type="ChEBI" id="CHEBI:15377"/>
        <dbReference type="ChEBI" id="CHEBI:29950"/>
        <dbReference type="ChEBI" id="CHEBI:50058"/>
        <dbReference type="ChEBI" id="CHEBI:57844"/>
        <dbReference type="ChEBI" id="CHEBI:58772"/>
        <dbReference type="EC" id="1.8.4.11"/>
    </reaction>
</comment>
<comment type="similarity">
    <text evidence="1">Belongs to the MsrA Met sulfoxide reductase family.</text>
</comment>
<dbReference type="EC" id="1.8.4.11" evidence="1"/>
<dbReference type="EMBL" id="CP001138">
    <property type="protein sequence ID" value="ACH50747.1"/>
    <property type="molecule type" value="Genomic_DNA"/>
</dbReference>
<dbReference type="RefSeq" id="WP_000051466.1">
    <property type="nucleotide sequence ID" value="NC_011149.1"/>
</dbReference>
<dbReference type="SMR" id="B5F3D4"/>
<dbReference type="KEGG" id="sea:SeAg_B4687"/>
<dbReference type="HOGENOM" id="CLU_031040_10_3_6"/>
<dbReference type="Proteomes" id="UP000008819">
    <property type="component" value="Chromosome"/>
</dbReference>
<dbReference type="GO" id="GO:0005737">
    <property type="term" value="C:cytoplasm"/>
    <property type="evidence" value="ECO:0007669"/>
    <property type="project" value="TreeGrafter"/>
</dbReference>
<dbReference type="GO" id="GO:0036456">
    <property type="term" value="F:L-methionine-(S)-S-oxide reductase activity"/>
    <property type="evidence" value="ECO:0007669"/>
    <property type="project" value="TreeGrafter"/>
</dbReference>
<dbReference type="GO" id="GO:0008113">
    <property type="term" value="F:peptide-methionine (S)-S-oxide reductase activity"/>
    <property type="evidence" value="ECO:0007669"/>
    <property type="project" value="UniProtKB-UniRule"/>
</dbReference>
<dbReference type="GO" id="GO:0034599">
    <property type="term" value="P:cellular response to oxidative stress"/>
    <property type="evidence" value="ECO:0007669"/>
    <property type="project" value="TreeGrafter"/>
</dbReference>
<dbReference type="GO" id="GO:0036211">
    <property type="term" value="P:protein modification process"/>
    <property type="evidence" value="ECO:0007669"/>
    <property type="project" value="UniProtKB-UniRule"/>
</dbReference>
<dbReference type="FunFam" id="3.30.1060.10:FF:000001">
    <property type="entry name" value="Peptide methionine sulfoxide reductase MsrA"/>
    <property type="match status" value="1"/>
</dbReference>
<dbReference type="Gene3D" id="3.30.1060.10">
    <property type="entry name" value="Peptide methionine sulphoxide reductase MsrA"/>
    <property type="match status" value="1"/>
</dbReference>
<dbReference type="HAMAP" id="MF_01401">
    <property type="entry name" value="MsrA"/>
    <property type="match status" value="1"/>
</dbReference>
<dbReference type="InterPro" id="IPR002569">
    <property type="entry name" value="Met_Sox_Rdtase_MsrA_dom"/>
</dbReference>
<dbReference type="InterPro" id="IPR036509">
    <property type="entry name" value="Met_Sox_Rdtase_MsrA_sf"/>
</dbReference>
<dbReference type="InterPro" id="IPR050162">
    <property type="entry name" value="MsrA_MetSO_reductase"/>
</dbReference>
<dbReference type="NCBIfam" id="TIGR00401">
    <property type="entry name" value="msrA"/>
    <property type="match status" value="1"/>
</dbReference>
<dbReference type="PANTHER" id="PTHR42799">
    <property type="entry name" value="MITOCHONDRIAL PEPTIDE METHIONINE SULFOXIDE REDUCTASE"/>
    <property type="match status" value="1"/>
</dbReference>
<dbReference type="PANTHER" id="PTHR42799:SF2">
    <property type="entry name" value="MITOCHONDRIAL PEPTIDE METHIONINE SULFOXIDE REDUCTASE"/>
    <property type="match status" value="1"/>
</dbReference>
<dbReference type="Pfam" id="PF01625">
    <property type="entry name" value="PMSR"/>
    <property type="match status" value="1"/>
</dbReference>
<dbReference type="SUPFAM" id="SSF55068">
    <property type="entry name" value="Peptide methionine sulfoxide reductase"/>
    <property type="match status" value="1"/>
</dbReference>
<protein>
    <recommendedName>
        <fullName evidence="1">Peptide methionine sulfoxide reductase MsrA</fullName>
        <shortName evidence="1">Protein-methionine-S-oxide reductase</shortName>
        <ecNumber evidence="1">1.8.4.11</ecNumber>
    </recommendedName>
    <alternativeName>
        <fullName evidence="1">Peptide-methionine (S)-S-oxide reductase</fullName>
        <shortName evidence="1">Peptide Met(O) reductase</shortName>
    </alternativeName>
</protein>
<keyword id="KW-0560">Oxidoreductase</keyword>
<name>MSRA_SALA4</name>
<reference key="1">
    <citation type="journal article" date="2011" name="J. Bacteriol.">
        <title>Comparative genomics of 28 Salmonella enterica isolates: evidence for CRISPR-mediated adaptive sublineage evolution.</title>
        <authorList>
            <person name="Fricke W.F."/>
            <person name="Mammel M.K."/>
            <person name="McDermott P.F."/>
            <person name="Tartera C."/>
            <person name="White D.G."/>
            <person name="Leclerc J.E."/>
            <person name="Ravel J."/>
            <person name="Cebula T.A."/>
        </authorList>
    </citation>
    <scope>NUCLEOTIDE SEQUENCE [LARGE SCALE GENOMIC DNA]</scope>
    <source>
        <strain>SL483</strain>
    </source>
</reference>